<proteinExistence type="evidence at protein level"/>
<organism>
    <name type="scientific">Homo sapiens</name>
    <name type="common">Human</name>
    <dbReference type="NCBI Taxonomy" id="9606"/>
    <lineage>
        <taxon>Eukaryota</taxon>
        <taxon>Metazoa</taxon>
        <taxon>Chordata</taxon>
        <taxon>Craniata</taxon>
        <taxon>Vertebrata</taxon>
        <taxon>Euteleostomi</taxon>
        <taxon>Mammalia</taxon>
        <taxon>Eutheria</taxon>
        <taxon>Euarchontoglires</taxon>
        <taxon>Primates</taxon>
        <taxon>Haplorrhini</taxon>
        <taxon>Catarrhini</taxon>
        <taxon>Hominidae</taxon>
        <taxon>Homo</taxon>
    </lineage>
</organism>
<name>TCAB1_HUMAN</name>
<sequence length="548" mass="59309">MKTLETQPLAPDCCPSDQDPAPAHPSPHASPMNKNADSELMPPPPERGDPPRLSPDPVAGSAVSQELREGDPVSLSTPLETEFGSPSELSPRIEEQELSENTSLPAEEANGSLSEEEANGPELGSGKAMEDTSGEPAAEDEGDTAWNYSFSQLPRFLSGSWSEFSTQPENFLKGCKWAPDGSCILTNSADNILRIYNLPPELYHEGEQVEYAEMVPVLRMVEGDTIYDYCWYSLMSSAQPDTSYVASSSRENPIHIWDAFTGELRASFRAYNHLDELTAAHSLCFSPDGSQLFCGFNRTVRVFSTARPGRDCEVRATFAKKQGQSGIISCIAFSPAQPLYACGSYGRSLGLYAWDDGSPLALLGGHQGGITHLCFHPDGNRFFSGARKDAELLCWDLRQSGYPLWSLGREVTTNQRIYFDLDPTGQFLVSGSTSGAVSVWDTDGPGNDGKPEPVLSFLPQKDCTNGVSLHPSLPLLATASGQRVFPEPTESGDEGEELGLPLLSTRHVHLECRLQLWWCGGAPDSSIPDDHQGEKGQGGTEGGVGELI</sequence>
<reference key="1">
    <citation type="submission" date="2006-03" db="EMBL/GenBank/DDBJ databases">
        <title>Endogenous p53 antisense transcript Wrap53 is required for p53 stabilization upon DNA damage.</title>
        <authorList>
            <person name="Hammarsund M."/>
        </authorList>
    </citation>
    <scope>NUCLEOTIDE SEQUENCE [MRNA]</scope>
</reference>
<reference key="2">
    <citation type="journal article" date="2004" name="Nat. Genet.">
        <title>Complete sequencing and characterization of 21,243 full-length human cDNAs.</title>
        <authorList>
            <person name="Ota T."/>
            <person name="Suzuki Y."/>
            <person name="Nishikawa T."/>
            <person name="Otsuki T."/>
            <person name="Sugiyama T."/>
            <person name="Irie R."/>
            <person name="Wakamatsu A."/>
            <person name="Hayashi K."/>
            <person name="Sato H."/>
            <person name="Nagai K."/>
            <person name="Kimura K."/>
            <person name="Makita H."/>
            <person name="Sekine M."/>
            <person name="Obayashi M."/>
            <person name="Nishi T."/>
            <person name="Shibahara T."/>
            <person name="Tanaka T."/>
            <person name="Ishii S."/>
            <person name="Yamamoto J."/>
            <person name="Saito K."/>
            <person name="Kawai Y."/>
            <person name="Isono Y."/>
            <person name="Nakamura Y."/>
            <person name="Nagahari K."/>
            <person name="Murakami K."/>
            <person name="Yasuda T."/>
            <person name="Iwayanagi T."/>
            <person name="Wagatsuma M."/>
            <person name="Shiratori A."/>
            <person name="Sudo H."/>
            <person name="Hosoiri T."/>
            <person name="Kaku Y."/>
            <person name="Kodaira H."/>
            <person name="Kondo H."/>
            <person name="Sugawara M."/>
            <person name="Takahashi M."/>
            <person name="Kanda K."/>
            <person name="Yokoi T."/>
            <person name="Furuya T."/>
            <person name="Kikkawa E."/>
            <person name="Omura Y."/>
            <person name="Abe K."/>
            <person name="Kamihara K."/>
            <person name="Katsuta N."/>
            <person name="Sato K."/>
            <person name="Tanikawa M."/>
            <person name="Yamazaki M."/>
            <person name="Ninomiya K."/>
            <person name="Ishibashi T."/>
            <person name="Yamashita H."/>
            <person name="Murakawa K."/>
            <person name="Fujimori K."/>
            <person name="Tanai H."/>
            <person name="Kimata M."/>
            <person name="Watanabe M."/>
            <person name="Hiraoka S."/>
            <person name="Chiba Y."/>
            <person name="Ishida S."/>
            <person name="Ono Y."/>
            <person name="Takiguchi S."/>
            <person name="Watanabe S."/>
            <person name="Yosida M."/>
            <person name="Hotuta T."/>
            <person name="Kusano J."/>
            <person name="Kanehori K."/>
            <person name="Takahashi-Fujii A."/>
            <person name="Hara H."/>
            <person name="Tanase T.-O."/>
            <person name="Nomura Y."/>
            <person name="Togiya S."/>
            <person name="Komai F."/>
            <person name="Hara R."/>
            <person name="Takeuchi K."/>
            <person name="Arita M."/>
            <person name="Imose N."/>
            <person name="Musashino K."/>
            <person name="Yuuki H."/>
            <person name="Oshima A."/>
            <person name="Sasaki N."/>
            <person name="Aotsuka S."/>
            <person name="Yoshikawa Y."/>
            <person name="Matsunawa H."/>
            <person name="Ichihara T."/>
            <person name="Shiohata N."/>
            <person name="Sano S."/>
            <person name="Moriya S."/>
            <person name="Momiyama H."/>
            <person name="Satoh N."/>
            <person name="Takami S."/>
            <person name="Terashima Y."/>
            <person name="Suzuki O."/>
            <person name="Nakagawa S."/>
            <person name="Senoh A."/>
            <person name="Mizoguchi H."/>
            <person name="Goto Y."/>
            <person name="Shimizu F."/>
            <person name="Wakebe H."/>
            <person name="Hishigaki H."/>
            <person name="Watanabe T."/>
            <person name="Sugiyama A."/>
            <person name="Takemoto M."/>
            <person name="Kawakami B."/>
            <person name="Yamazaki M."/>
            <person name="Watanabe K."/>
            <person name="Kumagai A."/>
            <person name="Itakura S."/>
            <person name="Fukuzumi Y."/>
            <person name="Fujimori Y."/>
            <person name="Komiyama M."/>
            <person name="Tashiro H."/>
            <person name="Tanigami A."/>
            <person name="Fujiwara T."/>
            <person name="Ono T."/>
            <person name="Yamada K."/>
            <person name="Fujii Y."/>
            <person name="Ozaki K."/>
            <person name="Hirao M."/>
            <person name="Ohmori Y."/>
            <person name="Kawabata A."/>
            <person name="Hikiji T."/>
            <person name="Kobatake N."/>
            <person name="Inagaki H."/>
            <person name="Ikema Y."/>
            <person name="Okamoto S."/>
            <person name="Okitani R."/>
            <person name="Kawakami T."/>
            <person name="Noguchi S."/>
            <person name="Itoh T."/>
            <person name="Shigeta K."/>
            <person name="Senba T."/>
            <person name="Matsumura K."/>
            <person name="Nakajima Y."/>
            <person name="Mizuno T."/>
            <person name="Morinaga M."/>
            <person name="Sasaki M."/>
            <person name="Togashi T."/>
            <person name="Oyama M."/>
            <person name="Hata H."/>
            <person name="Watanabe M."/>
            <person name="Komatsu T."/>
            <person name="Mizushima-Sugano J."/>
            <person name="Satoh T."/>
            <person name="Shirai Y."/>
            <person name="Takahashi Y."/>
            <person name="Nakagawa K."/>
            <person name="Okumura K."/>
            <person name="Nagase T."/>
            <person name="Nomura N."/>
            <person name="Kikuchi H."/>
            <person name="Masuho Y."/>
            <person name="Yamashita R."/>
            <person name="Nakai K."/>
            <person name="Yada T."/>
            <person name="Nakamura Y."/>
            <person name="Ohara O."/>
            <person name="Isogai T."/>
            <person name="Sugano S."/>
        </authorList>
    </citation>
    <scope>NUCLEOTIDE SEQUENCE [LARGE SCALE MRNA]</scope>
    <source>
        <tissue>Brain</tissue>
    </source>
</reference>
<reference key="3">
    <citation type="submission" date="2005-09" db="EMBL/GenBank/DDBJ databases">
        <authorList>
            <person name="Mural R.J."/>
            <person name="Istrail S."/>
            <person name="Sutton G.G."/>
            <person name="Florea L."/>
            <person name="Halpern A.L."/>
            <person name="Mobarry C.M."/>
            <person name="Lippert R."/>
            <person name="Walenz B."/>
            <person name="Shatkay H."/>
            <person name="Dew I."/>
            <person name="Miller J.R."/>
            <person name="Flanigan M.J."/>
            <person name="Edwards N.J."/>
            <person name="Bolanos R."/>
            <person name="Fasulo D."/>
            <person name="Halldorsson B.V."/>
            <person name="Hannenhalli S."/>
            <person name="Turner R."/>
            <person name="Yooseph S."/>
            <person name="Lu F."/>
            <person name="Nusskern D.R."/>
            <person name="Shue B.C."/>
            <person name="Zheng X.H."/>
            <person name="Zhong F."/>
            <person name="Delcher A.L."/>
            <person name="Huson D.H."/>
            <person name="Kravitz S.A."/>
            <person name="Mouchard L."/>
            <person name="Reinert K."/>
            <person name="Remington K.A."/>
            <person name="Clark A.G."/>
            <person name="Waterman M.S."/>
            <person name="Eichler E.E."/>
            <person name="Adams M.D."/>
            <person name="Hunkapiller M.W."/>
            <person name="Myers E.W."/>
            <person name="Venter J.C."/>
        </authorList>
    </citation>
    <scope>NUCLEOTIDE SEQUENCE [LARGE SCALE GENOMIC DNA]</scope>
    <scope>VARIANT GLY-68</scope>
</reference>
<reference key="4">
    <citation type="journal article" date="2004" name="Genome Res.">
        <title>The status, quality, and expansion of the NIH full-length cDNA project: the Mammalian Gene Collection (MGC).</title>
        <authorList>
            <consortium name="The MGC Project Team"/>
        </authorList>
    </citation>
    <scope>NUCLEOTIDE SEQUENCE [LARGE SCALE MRNA]</scope>
    <source>
        <tissue>Kidney</tissue>
    </source>
</reference>
<reference key="5">
    <citation type="journal article" date="2006" name="Cell">
        <title>Global, in vivo, and site-specific phosphorylation dynamics in signaling networks.</title>
        <authorList>
            <person name="Olsen J.V."/>
            <person name="Blagoev B."/>
            <person name="Gnad F."/>
            <person name="Macek B."/>
            <person name="Kumar C."/>
            <person name="Mortensen P."/>
            <person name="Mann M."/>
        </authorList>
    </citation>
    <scope>PHOSPHORYLATION [LARGE SCALE ANALYSIS] AT SER-54</scope>
    <scope>IDENTIFICATION BY MASS SPECTROMETRY [LARGE SCALE ANALYSIS]</scope>
    <source>
        <tissue>Cervix carcinoma</tissue>
    </source>
</reference>
<reference key="6">
    <citation type="journal article" date="2006" name="Nat. Biotechnol.">
        <title>A probability-based approach for high-throughput protein phosphorylation analysis and site localization.</title>
        <authorList>
            <person name="Beausoleil S.A."/>
            <person name="Villen J."/>
            <person name="Gerber S.A."/>
            <person name="Rush J."/>
            <person name="Gygi S.P."/>
        </authorList>
    </citation>
    <scope>PHOSPHORYLATION [LARGE SCALE ANALYSIS] AT SER-90</scope>
    <scope>IDENTIFICATION BY MASS SPECTROMETRY [LARGE SCALE ANALYSIS]</scope>
    <source>
        <tissue>Cervix carcinoma</tissue>
    </source>
</reference>
<reference key="7">
    <citation type="journal article" date="2007" name="Science">
        <title>ATM and ATR substrate analysis reveals extensive protein networks responsive to DNA damage.</title>
        <authorList>
            <person name="Matsuoka S."/>
            <person name="Ballif B.A."/>
            <person name="Smogorzewska A."/>
            <person name="McDonald E.R. III"/>
            <person name="Hurov K.E."/>
            <person name="Luo J."/>
            <person name="Bakalarski C.E."/>
            <person name="Zhao Z."/>
            <person name="Solimini N."/>
            <person name="Lerenthal Y."/>
            <person name="Shiloh Y."/>
            <person name="Gygi S.P."/>
            <person name="Elledge S.J."/>
        </authorList>
    </citation>
    <scope>IDENTIFICATION BY MASS SPECTROMETRY [LARGE SCALE ANALYSIS]</scope>
    <source>
        <tissue>Embryonic kidney</tissue>
    </source>
</reference>
<reference key="8">
    <citation type="journal article" date="2008" name="J. Proteome Res.">
        <title>Combining protein-based IMAC, peptide-based IMAC, and MudPIT for efficient phosphoproteomic analysis.</title>
        <authorList>
            <person name="Cantin G.T."/>
            <person name="Yi W."/>
            <person name="Lu B."/>
            <person name="Park S.K."/>
            <person name="Xu T."/>
            <person name="Lee J.-D."/>
            <person name="Yates J.R. III"/>
        </authorList>
    </citation>
    <scope>PHOSPHORYLATION [LARGE SCALE ANALYSIS] AT SER-54</scope>
    <scope>IDENTIFICATION BY MASS SPECTROMETRY [LARGE SCALE ANALYSIS]</scope>
    <source>
        <tissue>Cervix carcinoma</tissue>
    </source>
</reference>
<reference key="9">
    <citation type="journal article" date="2008" name="Proc. Natl. Acad. Sci. U.S.A.">
        <title>A quantitative atlas of mitotic phosphorylation.</title>
        <authorList>
            <person name="Dephoure N."/>
            <person name="Zhou C."/>
            <person name="Villen J."/>
            <person name="Beausoleil S.A."/>
            <person name="Bakalarski C.E."/>
            <person name="Elledge S.J."/>
            <person name="Gygi S.P."/>
        </authorList>
    </citation>
    <scope>PHOSPHORYLATION [LARGE SCALE ANALYSIS] AT SER-26; SER-30; SER-54; SER-85; SER-90; SER-112; SER-114; THR-489 AND SER-491</scope>
    <scope>IDENTIFICATION BY MASS SPECTROMETRY [LARGE SCALE ANALYSIS]</scope>
    <source>
        <tissue>Cervix carcinoma</tissue>
    </source>
</reference>
<reference key="10">
    <citation type="journal article" date="2009" name="Anal. Chem.">
        <title>Lys-N and trypsin cover complementary parts of the phosphoproteome in a refined SCX-based approach.</title>
        <authorList>
            <person name="Gauci S."/>
            <person name="Helbig A.O."/>
            <person name="Slijper M."/>
            <person name="Krijgsveld J."/>
            <person name="Heck A.J."/>
            <person name="Mohammed S."/>
        </authorList>
    </citation>
    <scope>IDENTIFICATION BY MASS SPECTROMETRY [LARGE SCALE ANALYSIS]</scope>
</reference>
<reference key="11">
    <citation type="journal article" date="2009" name="Mol. Cell">
        <title>Wrap53, a natural p53 antisense transcript required for p53 induction upon DNA damage.</title>
        <authorList>
            <person name="Mahmoudi S."/>
            <person name="Henriksson S."/>
            <person name="Corcoran M."/>
            <person name="Mendez-Vidal C."/>
            <person name="Wiman K.G."/>
            <person name="Farnebo M."/>
        </authorList>
    </citation>
    <scope>FUNCTION</scope>
    <scope>SUBCELLULAR LOCATION</scope>
    <scope>TISSUE SPECIFICITY</scope>
    <scope>ALTERNATIVE SPLICING</scope>
</reference>
<reference key="12">
    <citation type="journal article" date="2009" name="Mol. Cell">
        <title>A conserved WD40 protein binds the Cajal body localization signal of scaRNP particles.</title>
        <authorList>
            <person name="Tycowski K.T."/>
            <person name="Shu M.D."/>
            <person name="Kukoyi A."/>
            <person name="Steitz J.A."/>
        </authorList>
    </citation>
    <scope>FUNCTION</scope>
    <scope>RNA-BINDING</scope>
    <scope>SUBCELLULAR LOCATION</scope>
</reference>
<reference key="13">
    <citation type="journal article" date="2009" name="Sci. Signal.">
        <title>Quantitative phosphoproteomic analysis of T cell receptor signaling reveals system-wide modulation of protein-protein interactions.</title>
        <authorList>
            <person name="Mayya V."/>
            <person name="Lundgren D.H."/>
            <person name="Hwang S.-I."/>
            <person name="Rezaul K."/>
            <person name="Wu L."/>
            <person name="Eng J.K."/>
            <person name="Rodionov V."/>
            <person name="Han D.K."/>
        </authorList>
    </citation>
    <scope>PHOSPHORYLATION [LARGE SCALE ANALYSIS] AT SER-85; SER-90; SER-112; SER-114; THR-489 AND SER-491</scope>
    <scope>IDENTIFICATION BY MASS SPECTROMETRY [LARGE SCALE ANALYSIS]</scope>
    <source>
        <tissue>Leukemic T-cell</tissue>
    </source>
</reference>
<reference key="14">
    <citation type="journal article" date="2009" name="Science">
        <title>A human telomerase holoenzyme protein required for Cajal body localization and telomere synthesis.</title>
        <authorList>
            <person name="Venteicher A.S."/>
            <person name="Abreu E.B."/>
            <person name="Meng Z."/>
            <person name="McCann K.E."/>
            <person name="Terns R.M."/>
            <person name="Veenstra T.D."/>
            <person name="Terns M.P."/>
            <person name="Artandi S.E."/>
        </authorList>
    </citation>
    <scope>FUNCTION</scope>
    <scope>SUBCELLULAR LOCATION</scope>
    <scope>IDENTIFICATION BY MASS SPECTROMETRY</scope>
    <scope>IDENTIFICATION IN THE TELOMERASE HOLOENZYME COMPLEX</scope>
    <scope>RNA-BINDING</scope>
</reference>
<reference key="15">
    <citation type="journal article" date="2010" name="Mol. Cell. Biol.">
        <title>Specificity and stoichiometry of subunit interactions in the human telomerase holoenzyme assembled in vivo.</title>
        <authorList>
            <person name="Egan E.D."/>
            <person name="Collins K."/>
        </authorList>
    </citation>
    <scope>IDENTIFICATION IN THE TELOMERASE HOLOENZYME COMPLEX</scope>
    <scope>RNA-BINDING</scope>
    <scope>FUNCTION</scope>
</reference>
<reference key="16">
    <citation type="journal article" date="2010" name="PLoS Biol.">
        <title>WRAP53 is essential for Cajal body formation and for targeting the survival of motor neuron complex to Cajal bodies.</title>
        <authorList>
            <person name="Mahmoudi S."/>
            <person name="Henriksson S."/>
            <person name="Weibrecht I."/>
            <person name="Smith S."/>
            <person name="Soederberg O."/>
            <person name="Stroemblad S."/>
            <person name="Wiman K.G."/>
            <person name="Farnebo M."/>
        </authorList>
    </citation>
    <scope>FUNCTION</scope>
    <scope>SUBCELLULAR LOCATION</scope>
    <scope>INTERACTION WITH SMN1 AND COIL</scope>
</reference>
<reference key="17">
    <citation type="journal article" date="2010" name="Sci. Signal.">
        <title>Quantitative phosphoproteomics reveals widespread full phosphorylation site occupancy during mitosis.</title>
        <authorList>
            <person name="Olsen J.V."/>
            <person name="Vermeulen M."/>
            <person name="Santamaria A."/>
            <person name="Kumar C."/>
            <person name="Miller M.L."/>
            <person name="Jensen L.J."/>
            <person name="Gnad F."/>
            <person name="Cox J."/>
            <person name="Jensen T.S."/>
            <person name="Nigg E.A."/>
            <person name="Brunak S."/>
            <person name="Mann M."/>
        </authorList>
    </citation>
    <scope>PHOSPHORYLATION [LARGE SCALE ANALYSIS] AT SER-26; SER-30; SER-90 AND SER-491</scope>
    <scope>IDENTIFICATION BY MASS SPECTROMETRY [LARGE SCALE ANALYSIS]</scope>
    <source>
        <tissue>Cervix carcinoma</tissue>
    </source>
</reference>
<reference key="18">
    <citation type="journal article" date="2011" name="Sci. Signal.">
        <title>System-wide temporal characterization of the proteome and phosphoproteome of human embryonic stem cell differentiation.</title>
        <authorList>
            <person name="Rigbolt K.T."/>
            <person name="Prokhorova T.A."/>
            <person name="Akimov V."/>
            <person name="Henningsen J."/>
            <person name="Johansen P.T."/>
            <person name="Kratchmarova I."/>
            <person name="Kassem M."/>
            <person name="Mann M."/>
            <person name="Olsen J.V."/>
            <person name="Blagoev B."/>
        </authorList>
    </citation>
    <scope>PHOSPHORYLATION [LARGE SCALE ANALYSIS] AT SER-491</scope>
    <scope>IDENTIFICATION BY MASS SPECTROMETRY [LARGE SCALE ANALYSIS]</scope>
</reference>
<reference key="19">
    <citation type="journal article" date="2012" name="Mol. Cell. Biol.">
        <title>Telomerase recruitment requires both TCAB1 and Cajal bodies independently.</title>
        <authorList>
            <person name="Stern J.L."/>
            <person name="Zyner K.G."/>
            <person name="Pickett H.A."/>
            <person name="Cohen S.B."/>
            <person name="Bryan T.M."/>
        </authorList>
    </citation>
    <scope>FUNCTION</scope>
    <scope>SUBCELLULAR LOCATION</scope>
</reference>
<reference key="20">
    <citation type="journal article" date="2013" name="J. Proteome Res.">
        <title>Toward a comprehensive characterization of a human cancer cell phosphoproteome.</title>
        <authorList>
            <person name="Zhou H."/>
            <person name="Di Palma S."/>
            <person name="Preisinger C."/>
            <person name="Peng M."/>
            <person name="Polat A.N."/>
            <person name="Heck A.J."/>
            <person name="Mohammed S."/>
        </authorList>
    </citation>
    <scope>PHOSPHORYLATION [LARGE SCALE ANALYSIS] AT SER-54; SER-64; SER-90 AND SER-491</scope>
    <scope>IDENTIFICATION BY MASS SPECTROMETRY [LARGE SCALE ANALYSIS]</scope>
    <source>
        <tissue>Cervix carcinoma</tissue>
        <tissue>Erythroleukemia</tissue>
    </source>
</reference>
<reference key="21">
    <citation type="journal article" date="2014" name="Cell">
        <title>Proteostatic control of telomerase function through TRiC-mediated folding of TCAB1.</title>
        <authorList>
            <person name="Freund A."/>
            <person name="Zhong F.L."/>
            <person name="Venteicher A.S."/>
            <person name="Meng Z."/>
            <person name="Veenstra T.D."/>
            <person name="Frydman J."/>
            <person name="Artandi S.E."/>
        </authorList>
    </citation>
    <scope>INTERACTION WITH THE TRIC COMPLEX</scope>
</reference>
<reference key="22">
    <citation type="journal article" date="2014" name="Genes Dev.">
        <title>The scaffold protein WRAP53beta orchestrates the ubiquitin response critical for DNA double-strand break repair.</title>
        <authorList>
            <person name="Henriksson S."/>
            <person name="Rassoolzadeh H."/>
            <person name="Hedstroem E."/>
            <person name="Coucoravas C."/>
            <person name="Julner A."/>
            <person name="Goldstein M."/>
            <person name="Imreh G."/>
            <person name="Zhivotovsky B."/>
            <person name="Kastan M.B."/>
            <person name="Helleday T."/>
            <person name="Farnebo M."/>
        </authorList>
    </citation>
    <scope>FUNCTION</scope>
    <scope>SUBCELLULAR LOCATION</scope>
    <scope>INTERACTION WITH RNF8</scope>
</reference>
<reference key="23">
    <citation type="journal article" date="2014" name="Histochem. Cell Biol.">
        <title>Catalytically active telomerase holoenzyme is assembled in the dense fibrillar component of the nucleolus during S phase.</title>
        <authorList>
            <person name="Lee J.H."/>
            <person name="Lee Y.S."/>
            <person name="Jeong S.A."/>
            <person name="Khadka P."/>
            <person name="Roth J."/>
            <person name="Chung I.K."/>
        </authorList>
    </citation>
    <scope>SUBCELLULAR LOCATION</scope>
</reference>
<reference key="24">
    <citation type="journal article" date="2014" name="J. Proteomics">
        <title>An enzyme assisted RP-RPLC approach for in-depth analysis of human liver phosphoproteome.</title>
        <authorList>
            <person name="Bian Y."/>
            <person name="Song C."/>
            <person name="Cheng K."/>
            <person name="Dong M."/>
            <person name="Wang F."/>
            <person name="Huang J."/>
            <person name="Sun D."/>
            <person name="Wang L."/>
            <person name="Ye M."/>
            <person name="Zou H."/>
        </authorList>
    </citation>
    <scope>PHOSPHORYLATION [LARGE SCALE ANALYSIS] AT SER-54; SER-85 AND SER-90</scope>
    <scope>IDENTIFICATION BY MASS SPECTROMETRY [LARGE SCALE ANALYSIS]</scope>
    <source>
        <tissue>Liver</tissue>
    </source>
</reference>
<reference key="25">
    <citation type="journal article" date="2015" name="J. Biol. Chem.">
        <title>Dynamics of Human Telomerase Holoenzyme Assembly and Subunit Exchange across the Cell Cycle.</title>
        <authorList>
            <person name="Vogan J.M."/>
            <person name="Collins K."/>
        </authorList>
    </citation>
    <scope>FUNCTION</scope>
    <scope>IDENTIFICATION IN THE TELOMERASE HOLOENZYME COMPLEX</scope>
    <scope>RNA-BINDING</scope>
    <scope>SUBCELLULAR LOCATION</scope>
</reference>
<reference key="26">
    <citation type="journal article" date="2015" name="Nucleus">
        <title>The proximity ligation assay reveals that at DNA double-strand breaks WRAP53beta associates with gammaH2AX and controls interactions between RNF8 and MDC1.</title>
        <authorList>
            <person name="Rassoolzadeh H."/>
            <person name="Coucoravas C."/>
            <person name="Farnebo M."/>
        </authorList>
    </citation>
    <scope>SUBCELLULAR LOCATION</scope>
    <scope>INTERACTION WITH H2AX</scope>
</reference>
<reference key="27">
    <citation type="journal article" date="2016" name="Elife">
        <title>Minimized human telomerase maintains telomeres and resolves endogenous roles of H/ACA proteins, TCAB1, and Cajal bodies.</title>
        <authorList>
            <person name="Vogan J.M."/>
            <person name="Zhang X."/>
            <person name="Youmans D.T."/>
            <person name="Regalado S.G."/>
            <person name="Johnson J.Z."/>
            <person name="Hockemeyer D."/>
            <person name="Collins K."/>
        </authorList>
    </citation>
    <scope>FUNCTION</scope>
</reference>
<reference key="28">
    <citation type="journal article" date="2017" name="RNA Biol.">
        <title>Phosphorylation of the Cajal body protein WRAP53beta by ATM promotes its involvement in the DNA damage response.</title>
        <authorList>
            <person name="Coucoravas C."/>
            <person name="Dhanjal S."/>
            <person name="Henriksson S."/>
            <person name="Boehm S."/>
            <person name="Farnebo M."/>
        </authorList>
    </citation>
    <scope>FUNCTION</scope>
    <scope>SUBCELLULAR LOCATION</scope>
    <scope>INTERACTION WITH H2AX</scope>
    <scope>PHOSPHORYLATION AT SER-64</scope>
    <scope>MUTAGENESIS OF SER-64</scope>
</reference>
<reference key="29">
    <citation type="journal article" date="2017" name="Sci. Rep.">
        <title>Epstein-Barr virus-induced up-regulation of TCAB1 is involved in the DNA damage response in nasopharyngeal carcinoma.</title>
        <authorList>
            <person name="Wang K."/>
            <person name="Ge Y."/>
            <person name="Ni C."/>
            <person name="Cui B."/>
            <person name="Du J."/>
            <person name="Zhang B."/>
            <person name="Hu X."/>
            <person name="Chen J."/>
            <person name="Xiao L."/>
            <person name="Sun C."/>
            <person name="Li Y."/>
        </authorList>
    </citation>
    <scope>INDUCTION (MICROBIAL INFECTION)</scope>
</reference>
<reference key="30">
    <citation type="journal article" date="2018" name="Cell">
        <title>An Activity Switch in Human Telomerase Based on RNA Conformation and Shaped by TCAB1.</title>
        <authorList>
            <person name="Chen L."/>
            <person name="Roake C.M."/>
            <person name="Freund A."/>
            <person name="Batista P.J."/>
            <person name="Tian S."/>
            <person name="Yin Y.A."/>
            <person name="Gajera C.R."/>
            <person name="Lin S."/>
            <person name="Lee B."/>
            <person name="Pech M.F."/>
            <person name="Venteicher A.S."/>
            <person name="Das R."/>
            <person name="Chang H.Y."/>
            <person name="Artandi S.E."/>
        </authorList>
    </citation>
    <scope>FUNCTION</scope>
    <scope>SUBCELLULAR LOCATION</scope>
    <scope>RNA-BINDING</scope>
</reference>
<reference key="31">
    <citation type="journal article" date="2018" name="Nature">
        <title>Cryo-EM structure of substrate-bound human telomerase holoenzyme.</title>
        <authorList>
            <person name="Nguyen T.H.D."/>
            <person name="Tam J."/>
            <person name="Wu R.A."/>
            <person name="Greber B.J."/>
            <person name="Toso D."/>
            <person name="Nogales E."/>
            <person name="Collins K."/>
        </authorList>
    </citation>
    <scope>STRUCTURE BY ELECTRON MICROSCOPY (7.7 ANGSTROMS) OF THE TELOMERASE HOLOENZYME COMPLEX</scope>
    <scope>IDENTIFICATION IN THE TELOMERASE HOLOENZYME COMPLEX</scope>
    <scope>RNA-BINDING</scope>
    <scope>FUNCTION</scope>
</reference>
<reference key="32">
    <citation type="journal article" date="2011" name="Genes Dev.">
        <title>Disruption of telomerase trafficking by TCAB1 mutation causes dyskeratosis congenita.</title>
        <authorList>
            <person name="Zhong F."/>
            <person name="Savage S.A."/>
            <person name="Shkreli M."/>
            <person name="Giri N."/>
            <person name="Jessop L."/>
            <person name="Myers T."/>
            <person name="Chen R."/>
            <person name="Alter B.P."/>
            <person name="Artandi S.E."/>
        </authorList>
    </citation>
    <scope>VARIANTS DKCB3 LEU-164; TYR-376; TRP-398 AND ARG-435</scope>
    <scope>VARIANTS GLY-68 AND GLY-522</scope>
    <scope>CHARACTERIZATION OF VARIANTS DKCB3 LEU-164; TYR-376; TRP-398 AND ARG-435</scope>
</reference>
<reference key="33">
    <citation type="journal article" date="2011" name="Nature">
        <title>Telomere shortening and loss of self-renewal in dyskeratosis congenita induced pluripotent stem cells.</title>
        <authorList>
            <person name="Batista L.F."/>
            <person name="Pech M.F."/>
            <person name="Zhong F.L."/>
            <person name="Nguyen H.N."/>
            <person name="Xie K.T."/>
            <person name="Zaug A.J."/>
            <person name="Crary S.M."/>
            <person name="Choi J."/>
            <person name="Sebastiano V."/>
            <person name="Cherry A."/>
            <person name="Giri N."/>
            <person name="Wernig M."/>
            <person name="Alter B.P."/>
            <person name="Cech T.R."/>
            <person name="Savage S.A."/>
            <person name="Reijo Pera R.A."/>
            <person name="Artandi S.E."/>
        </authorList>
    </citation>
    <scope>VARIANTS DKCB3 TYR-376 AND ARG-435</scope>
    <scope>CHARACTERIZATION OF VARIANTS DKCB3 TYR-376 AND ARG-435</scope>
</reference>
<keyword id="KW-0002">3D-structure</keyword>
<keyword id="KW-0143">Chaperone</keyword>
<keyword id="KW-0158">Chromosome</keyword>
<keyword id="KW-0225">Disease variant</keyword>
<keyword id="KW-0227">DNA damage</keyword>
<keyword id="KW-0234">DNA repair</keyword>
<keyword id="KW-1011">Dyskeratosis congenita</keyword>
<keyword id="KW-0945">Host-virus interaction</keyword>
<keyword id="KW-0539">Nucleus</keyword>
<keyword id="KW-0597">Phosphoprotein</keyword>
<keyword id="KW-1267">Proteomics identification</keyword>
<keyword id="KW-1185">Reference proteome</keyword>
<keyword id="KW-0677">Repeat</keyword>
<keyword id="KW-0694">RNA-binding</keyword>
<keyword id="KW-0779">Telomere</keyword>
<keyword id="KW-0853">WD repeat</keyword>
<dbReference type="EMBL" id="AY766322">
    <property type="protein sequence ID" value="AAW92115.1"/>
    <property type="molecule type" value="mRNA"/>
</dbReference>
<dbReference type="EMBL" id="DQ431240">
    <property type="protein sequence ID" value="ABD92817.1"/>
    <property type="molecule type" value="mRNA"/>
</dbReference>
<dbReference type="EMBL" id="DQ431241">
    <property type="protein sequence ID" value="ABD92818.1"/>
    <property type="molecule type" value="mRNA"/>
</dbReference>
<dbReference type="EMBL" id="AK001247">
    <property type="protein sequence ID" value="BAA91579.1"/>
    <property type="molecule type" value="mRNA"/>
</dbReference>
<dbReference type="EMBL" id="AK056669">
    <property type="protein sequence ID" value="BAG51781.1"/>
    <property type="molecule type" value="mRNA"/>
</dbReference>
<dbReference type="EMBL" id="CH471108">
    <property type="protein sequence ID" value="EAW90136.1"/>
    <property type="molecule type" value="Genomic_DNA"/>
</dbReference>
<dbReference type="EMBL" id="CH471108">
    <property type="protein sequence ID" value="EAW90138.1"/>
    <property type="molecule type" value="Genomic_DNA"/>
</dbReference>
<dbReference type="EMBL" id="CH471108">
    <property type="protein sequence ID" value="EAW90139.1"/>
    <property type="molecule type" value="Genomic_DNA"/>
</dbReference>
<dbReference type="EMBL" id="BC002336">
    <property type="protein sequence ID" value="AAH02336.1"/>
    <property type="molecule type" value="mRNA"/>
</dbReference>
<dbReference type="CCDS" id="CCDS11119.1"/>
<dbReference type="RefSeq" id="NP_001137462.1">
    <property type="nucleotide sequence ID" value="NM_001143990.2"/>
</dbReference>
<dbReference type="RefSeq" id="NP_001137463.1">
    <property type="nucleotide sequence ID" value="NM_001143991.2"/>
</dbReference>
<dbReference type="RefSeq" id="NP_001137464.1">
    <property type="nucleotide sequence ID" value="NM_001143992.2"/>
</dbReference>
<dbReference type="RefSeq" id="NP_060551.2">
    <property type="nucleotide sequence ID" value="NM_018081.2"/>
</dbReference>
<dbReference type="PDB" id="7BGB">
    <property type="method" value="EM"/>
    <property type="resolution" value="3.39 A"/>
    <property type="chains" value="K=1-548"/>
</dbReference>
<dbReference type="PDB" id="7TRC">
    <property type="method" value="EM"/>
    <property type="resolution" value="3.30 A"/>
    <property type="chains" value="K=1-548"/>
</dbReference>
<dbReference type="PDB" id="7V9A">
    <property type="method" value="EM"/>
    <property type="resolution" value="3.94 A"/>
    <property type="chains" value="B=1-548"/>
</dbReference>
<dbReference type="PDB" id="8OUE">
    <property type="method" value="EM"/>
    <property type="resolution" value="2.70 A"/>
    <property type="chains" value="K=1-548"/>
</dbReference>
<dbReference type="PDB" id="8OUF">
    <property type="method" value="EM"/>
    <property type="resolution" value="3.10 A"/>
    <property type="chains" value="K=1-548"/>
</dbReference>
<dbReference type="PDBsum" id="7BGB"/>
<dbReference type="PDBsum" id="7TRC"/>
<dbReference type="PDBsum" id="7V9A"/>
<dbReference type="PDBsum" id="8OUE"/>
<dbReference type="PDBsum" id="8OUF"/>
<dbReference type="EMDB" id="EMD-12177"/>
<dbReference type="EMDB" id="EMD-17190"/>
<dbReference type="EMDB" id="EMD-17191"/>
<dbReference type="EMDB" id="EMD-26085"/>
<dbReference type="EMDB" id="EMD-31813"/>
<dbReference type="EMDB" id="EMD-31814"/>
<dbReference type="SMR" id="Q9BUR4"/>
<dbReference type="BioGRID" id="120440">
    <property type="interactions" value="123"/>
</dbReference>
<dbReference type="ComplexPortal" id="CPX-265">
    <property type="entry name" value="Telomerase holoenzyme complex"/>
</dbReference>
<dbReference type="CORUM" id="Q9BUR4"/>
<dbReference type="DIP" id="DIP-56796N"/>
<dbReference type="FunCoup" id="Q9BUR4">
    <property type="interactions" value="3555"/>
</dbReference>
<dbReference type="IntAct" id="Q9BUR4">
    <property type="interactions" value="70"/>
</dbReference>
<dbReference type="STRING" id="9606.ENSP00000324203"/>
<dbReference type="GlyGen" id="Q9BUR4">
    <property type="glycosylation" value="1 site, 1 O-linked glycan (1 site)"/>
</dbReference>
<dbReference type="iPTMnet" id="Q9BUR4"/>
<dbReference type="MetOSite" id="Q9BUR4"/>
<dbReference type="PhosphoSitePlus" id="Q9BUR4"/>
<dbReference type="BioMuta" id="WRAP53"/>
<dbReference type="DMDM" id="74761275"/>
<dbReference type="jPOST" id="Q9BUR4"/>
<dbReference type="MassIVE" id="Q9BUR4"/>
<dbReference type="PaxDb" id="9606-ENSP00000324203"/>
<dbReference type="PeptideAtlas" id="Q9BUR4"/>
<dbReference type="ProteomicsDB" id="79122"/>
<dbReference type="Pumba" id="Q9BUR4"/>
<dbReference type="Antibodypedia" id="24336">
    <property type="antibodies" value="86 antibodies from 23 providers"/>
</dbReference>
<dbReference type="DNASU" id="55135"/>
<dbReference type="Ensembl" id="ENST00000316024.9">
    <property type="protein sequence ID" value="ENSP00000324203.5"/>
    <property type="gene ID" value="ENSG00000141499.18"/>
</dbReference>
<dbReference type="Ensembl" id="ENST00000396463.7">
    <property type="protein sequence ID" value="ENSP00000379727.3"/>
    <property type="gene ID" value="ENSG00000141499.18"/>
</dbReference>
<dbReference type="Ensembl" id="ENST00000431639.6">
    <property type="protein sequence ID" value="ENSP00000397219.2"/>
    <property type="gene ID" value="ENSG00000141499.18"/>
</dbReference>
<dbReference type="Ensembl" id="ENST00000457584.6">
    <property type="protein sequence ID" value="ENSP00000411061.2"/>
    <property type="gene ID" value="ENSG00000141499.18"/>
</dbReference>
<dbReference type="GeneID" id="55135"/>
<dbReference type="KEGG" id="hsa:55135"/>
<dbReference type="MANE-Select" id="ENST00000396463.7">
    <property type="protein sequence ID" value="ENSP00000379727.3"/>
    <property type="RefSeq nucleotide sequence ID" value="NM_001143992.2"/>
    <property type="RefSeq protein sequence ID" value="NP_001137464.1"/>
</dbReference>
<dbReference type="UCSC" id="uc002gip.4">
    <property type="organism name" value="human"/>
</dbReference>
<dbReference type="AGR" id="HGNC:25522"/>
<dbReference type="CTD" id="55135"/>
<dbReference type="DisGeNET" id="55135"/>
<dbReference type="GeneCards" id="WRAP53"/>
<dbReference type="GeneReviews" id="WRAP53"/>
<dbReference type="HGNC" id="HGNC:25522">
    <property type="gene designation" value="WRAP53"/>
</dbReference>
<dbReference type="HPA" id="ENSG00000141499">
    <property type="expression patterns" value="Low tissue specificity"/>
</dbReference>
<dbReference type="MalaCards" id="WRAP53"/>
<dbReference type="MIM" id="612661">
    <property type="type" value="gene"/>
</dbReference>
<dbReference type="MIM" id="613988">
    <property type="type" value="phenotype"/>
</dbReference>
<dbReference type="neXtProt" id="NX_Q9BUR4"/>
<dbReference type="OpenTargets" id="ENSG00000141499"/>
<dbReference type="Orphanet" id="1775">
    <property type="disease" value="Dyskeratosis congenita"/>
</dbReference>
<dbReference type="PharmGKB" id="PA164727568"/>
<dbReference type="VEuPathDB" id="HostDB:ENSG00000141499"/>
<dbReference type="eggNOG" id="KOG2919">
    <property type="taxonomic scope" value="Eukaryota"/>
</dbReference>
<dbReference type="GeneTree" id="ENSGT00390000010169"/>
<dbReference type="HOGENOM" id="CLU_022731_1_1_1"/>
<dbReference type="InParanoid" id="Q9BUR4"/>
<dbReference type="OMA" id="IRTWILP"/>
<dbReference type="OrthoDB" id="239865at2759"/>
<dbReference type="PAN-GO" id="Q9BUR4">
    <property type="GO annotations" value="3 GO annotations based on evolutionary models"/>
</dbReference>
<dbReference type="PhylomeDB" id="Q9BUR4"/>
<dbReference type="TreeFam" id="TF315169"/>
<dbReference type="PathwayCommons" id="Q9BUR4"/>
<dbReference type="Reactome" id="R-HSA-171319">
    <property type="pathway name" value="Telomere Extension By Telomerase"/>
</dbReference>
<dbReference type="Reactome" id="R-HSA-390471">
    <property type="pathway name" value="Association of TriC/CCT with target proteins during biosynthesis"/>
</dbReference>
<dbReference type="SignaLink" id="Q9BUR4"/>
<dbReference type="SIGNOR" id="Q9BUR4"/>
<dbReference type="BioGRID-ORCS" id="55135">
    <property type="hits" value="138 hits in 1165 CRISPR screens"/>
</dbReference>
<dbReference type="CD-CODE" id="6F24707C">
    <property type="entry name" value="Cajal body"/>
</dbReference>
<dbReference type="GenomeRNAi" id="55135"/>
<dbReference type="Pharos" id="Q9BUR4">
    <property type="development level" value="Tbio"/>
</dbReference>
<dbReference type="PRO" id="PR:Q9BUR4"/>
<dbReference type="Proteomes" id="UP000005640">
    <property type="component" value="Chromosome 17"/>
</dbReference>
<dbReference type="RNAct" id="Q9BUR4">
    <property type="molecule type" value="protein"/>
</dbReference>
<dbReference type="Bgee" id="ENSG00000141499">
    <property type="expression patterns" value="Expressed in right uterine tube and 169 other cell types or tissues"/>
</dbReference>
<dbReference type="ExpressionAtlas" id="Q9BUR4">
    <property type="expression patterns" value="baseline and differential"/>
</dbReference>
<dbReference type="GO" id="GO:0015030">
    <property type="term" value="C:Cajal body"/>
    <property type="evidence" value="ECO:0000314"/>
    <property type="project" value="UniProtKB"/>
</dbReference>
<dbReference type="GO" id="GO:0000781">
    <property type="term" value="C:chromosome, telomeric region"/>
    <property type="evidence" value="ECO:0007669"/>
    <property type="project" value="UniProtKB-SubCell"/>
</dbReference>
<dbReference type="GO" id="GO:0005829">
    <property type="term" value="C:cytosol"/>
    <property type="evidence" value="ECO:0000314"/>
    <property type="project" value="HPA"/>
</dbReference>
<dbReference type="GO" id="GO:0016604">
    <property type="term" value="C:nuclear body"/>
    <property type="evidence" value="ECO:0000314"/>
    <property type="project" value="HPA"/>
</dbReference>
<dbReference type="GO" id="GO:0005654">
    <property type="term" value="C:nucleoplasm"/>
    <property type="evidence" value="ECO:0000314"/>
    <property type="project" value="HPA"/>
</dbReference>
<dbReference type="GO" id="GO:0035861">
    <property type="term" value="C:site of double-strand break"/>
    <property type="evidence" value="ECO:0000314"/>
    <property type="project" value="UniProtKB"/>
</dbReference>
<dbReference type="GO" id="GO:0005697">
    <property type="term" value="C:telomerase holoenzyme complex"/>
    <property type="evidence" value="ECO:0000314"/>
    <property type="project" value="UniProtKB"/>
</dbReference>
<dbReference type="GO" id="GO:0042393">
    <property type="term" value="F:histone binding"/>
    <property type="evidence" value="ECO:0000353"/>
    <property type="project" value="UniProtKB"/>
</dbReference>
<dbReference type="GO" id="GO:0042802">
    <property type="term" value="F:identical protein binding"/>
    <property type="evidence" value="ECO:0000353"/>
    <property type="project" value="IntAct"/>
</dbReference>
<dbReference type="GO" id="GO:0140597">
    <property type="term" value="F:protein carrier chaperone"/>
    <property type="evidence" value="ECO:0000315"/>
    <property type="project" value="BHF-UCL"/>
</dbReference>
<dbReference type="GO" id="GO:0044877">
    <property type="term" value="F:protein-containing complex binding"/>
    <property type="evidence" value="ECO:0000314"/>
    <property type="project" value="BHF-UCL"/>
</dbReference>
<dbReference type="GO" id="GO:0051087">
    <property type="term" value="F:protein-folding chaperone binding"/>
    <property type="evidence" value="ECO:0000353"/>
    <property type="project" value="BHF-UCL"/>
</dbReference>
<dbReference type="GO" id="GO:0003723">
    <property type="term" value="F:RNA binding"/>
    <property type="evidence" value="ECO:0000314"/>
    <property type="project" value="UniProtKB"/>
</dbReference>
<dbReference type="GO" id="GO:0140691">
    <property type="term" value="F:RNA folding chaperone"/>
    <property type="evidence" value="ECO:0000314"/>
    <property type="project" value="UniProtKB"/>
</dbReference>
<dbReference type="GO" id="GO:0070034">
    <property type="term" value="F:telomerase RNA binding"/>
    <property type="evidence" value="ECO:0000314"/>
    <property type="project" value="UniProtKB"/>
</dbReference>
<dbReference type="GO" id="GO:0031625">
    <property type="term" value="F:ubiquitin protein ligase binding"/>
    <property type="evidence" value="ECO:0000353"/>
    <property type="project" value="UniProtKB"/>
</dbReference>
<dbReference type="GO" id="GO:0030576">
    <property type="term" value="P:Cajal body organization"/>
    <property type="evidence" value="ECO:0000315"/>
    <property type="project" value="UniProtKB"/>
</dbReference>
<dbReference type="GO" id="GO:0006281">
    <property type="term" value="P:DNA repair"/>
    <property type="evidence" value="ECO:0007669"/>
    <property type="project" value="UniProtKB-KW"/>
</dbReference>
<dbReference type="GO" id="GO:0045739">
    <property type="term" value="P:positive regulation of DNA repair"/>
    <property type="evidence" value="ECO:0000314"/>
    <property type="project" value="UniProtKB"/>
</dbReference>
<dbReference type="GO" id="GO:2000781">
    <property type="term" value="P:positive regulation of double-strand break repair"/>
    <property type="evidence" value="ECO:0000314"/>
    <property type="project" value="UniProtKB"/>
</dbReference>
<dbReference type="GO" id="GO:1905168">
    <property type="term" value="P:positive regulation of double-strand break repair via homologous recombination"/>
    <property type="evidence" value="ECO:0000314"/>
    <property type="project" value="UniProtKB"/>
</dbReference>
<dbReference type="GO" id="GO:2001034">
    <property type="term" value="P:positive regulation of double-strand break repair via nonhomologous end joining"/>
    <property type="evidence" value="ECO:0000314"/>
    <property type="project" value="UniProtKB"/>
</dbReference>
<dbReference type="GO" id="GO:1904851">
    <property type="term" value="P:positive regulation of establishment of protein localization to telomere"/>
    <property type="evidence" value="ECO:0000315"/>
    <property type="project" value="BHF-UCL"/>
</dbReference>
<dbReference type="GO" id="GO:0032212">
    <property type="term" value="P:positive regulation of telomere maintenance via telomerase"/>
    <property type="evidence" value="ECO:0000314"/>
    <property type="project" value="BHF-UCL"/>
</dbReference>
<dbReference type="GO" id="GO:1904867">
    <property type="term" value="P:protein localization to Cajal body"/>
    <property type="evidence" value="ECO:0000314"/>
    <property type="project" value="UniProtKB"/>
</dbReference>
<dbReference type="GO" id="GO:0034337">
    <property type="term" value="P:RNA folding"/>
    <property type="evidence" value="ECO:0000314"/>
    <property type="project" value="UniProtKB"/>
</dbReference>
<dbReference type="GO" id="GO:0090666">
    <property type="term" value="P:scaRNA localization to Cajal body"/>
    <property type="evidence" value="ECO:0000314"/>
    <property type="project" value="UniProtKB"/>
</dbReference>
<dbReference type="GO" id="GO:0090671">
    <property type="term" value="P:telomerase RNA localization to Cajal body"/>
    <property type="evidence" value="ECO:0000315"/>
    <property type="project" value="BHF-UCL"/>
</dbReference>
<dbReference type="GO" id="GO:0032203">
    <property type="term" value="P:telomere formation via telomerase"/>
    <property type="evidence" value="ECO:0000315"/>
    <property type="project" value="UniProtKB"/>
</dbReference>
<dbReference type="GO" id="GO:0007004">
    <property type="term" value="P:telomere maintenance via telomerase"/>
    <property type="evidence" value="ECO:0000314"/>
    <property type="project" value="UniProtKB"/>
</dbReference>
<dbReference type="FunFam" id="2.130.10.10:FF:000646">
    <property type="entry name" value="WD repeat containing antisense to TP53"/>
    <property type="match status" value="1"/>
</dbReference>
<dbReference type="Gene3D" id="2.130.10.10">
    <property type="entry name" value="YVTN repeat-like/Quinoprotein amine dehydrogenase"/>
    <property type="match status" value="1"/>
</dbReference>
<dbReference type="InterPro" id="IPR051150">
    <property type="entry name" value="SWT21/TCAB1_mRNA_Telomere"/>
</dbReference>
<dbReference type="InterPro" id="IPR015943">
    <property type="entry name" value="WD40/YVTN_repeat-like_dom_sf"/>
</dbReference>
<dbReference type="InterPro" id="IPR036322">
    <property type="entry name" value="WD40_repeat_dom_sf"/>
</dbReference>
<dbReference type="InterPro" id="IPR001680">
    <property type="entry name" value="WD40_rpt"/>
</dbReference>
<dbReference type="PANTHER" id="PTHR13211">
    <property type="entry name" value="TELOMERASE CAJAL BODY PROTEIN 1"/>
    <property type="match status" value="1"/>
</dbReference>
<dbReference type="PANTHER" id="PTHR13211:SF0">
    <property type="entry name" value="TELOMERASE CAJAL BODY PROTEIN 1"/>
    <property type="match status" value="1"/>
</dbReference>
<dbReference type="Pfam" id="PF00400">
    <property type="entry name" value="WD40"/>
    <property type="match status" value="4"/>
</dbReference>
<dbReference type="SMART" id="SM00320">
    <property type="entry name" value="WD40"/>
    <property type="match status" value="5"/>
</dbReference>
<dbReference type="SUPFAM" id="SSF50978">
    <property type="entry name" value="WD40 repeat-like"/>
    <property type="match status" value="1"/>
</dbReference>
<dbReference type="PROSITE" id="PS50082">
    <property type="entry name" value="WD_REPEATS_2"/>
    <property type="match status" value="2"/>
</dbReference>
<dbReference type="PROSITE" id="PS50294">
    <property type="entry name" value="WD_REPEATS_REGION"/>
    <property type="match status" value="1"/>
</dbReference>
<accession>Q9BUR4</accession>
<accession>B3KPR9</accession>
<accession>D3DTQ4</accession>
<accession>Q08ET9</accession>
<accession>Q9NW09</accession>
<gene>
    <name evidence="23 27" type="primary">WRAP53</name>
    <name evidence="22" type="synonym">TCAB1</name>
    <name evidence="24" type="synonym">WDR79</name>
</gene>
<evidence type="ECO:0000255" key="1"/>
<evidence type="ECO:0000256" key="2">
    <source>
        <dbReference type="SAM" id="MobiDB-lite"/>
    </source>
</evidence>
<evidence type="ECO:0000269" key="3">
    <source>
    </source>
</evidence>
<evidence type="ECO:0000269" key="4">
    <source>
    </source>
</evidence>
<evidence type="ECO:0000269" key="5">
    <source>
    </source>
</evidence>
<evidence type="ECO:0000269" key="6">
    <source>
    </source>
</evidence>
<evidence type="ECO:0000269" key="7">
    <source>
    </source>
</evidence>
<evidence type="ECO:0000269" key="8">
    <source>
    </source>
</evidence>
<evidence type="ECO:0000269" key="9">
    <source>
    </source>
</evidence>
<evidence type="ECO:0000269" key="10">
    <source>
    </source>
</evidence>
<evidence type="ECO:0000269" key="11">
    <source>
    </source>
</evidence>
<evidence type="ECO:0000269" key="12">
    <source>
    </source>
</evidence>
<evidence type="ECO:0000269" key="13">
    <source>
    </source>
</evidence>
<evidence type="ECO:0000269" key="14">
    <source>
    </source>
</evidence>
<evidence type="ECO:0000269" key="15">
    <source>
    </source>
</evidence>
<evidence type="ECO:0000269" key="16">
    <source>
    </source>
</evidence>
<evidence type="ECO:0000269" key="17">
    <source>
    </source>
</evidence>
<evidence type="ECO:0000269" key="18">
    <source>
    </source>
</evidence>
<evidence type="ECO:0000269" key="19">
    <source>
    </source>
</evidence>
<evidence type="ECO:0000269" key="20">
    <source>
    </source>
</evidence>
<evidence type="ECO:0000269" key="21">
    <source ref="3"/>
</evidence>
<evidence type="ECO:0000303" key="22">
    <source>
    </source>
</evidence>
<evidence type="ECO:0000303" key="23">
    <source>
    </source>
</evidence>
<evidence type="ECO:0000303" key="24">
    <source>
    </source>
</evidence>
<evidence type="ECO:0000303" key="25">
    <source>
    </source>
</evidence>
<evidence type="ECO:0000305" key="26"/>
<evidence type="ECO:0000312" key="27">
    <source>
        <dbReference type="HGNC" id="HGNC:25522"/>
    </source>
</evidence>
<evidence type="ECO:0007744" key="28">
    <source>
    </source>
</evidence>
<evidence type="ECO:0007744" key="29">
    <source>
    </source>
</evidence>
<evidence type="ECO:0007744" key="30">
    <source>
    </source>
</evidence>
<evidence type="ECO:0007744" key="31">
    <source>
    </source>
</evidence>
<evidence type="ECO:0007744" key="32">
    <source>
    </source>
</evidence>
<evidence type="ECO:0007744" key="33">
    <source>
    </source>
</evidence>
<evidence type="ECO:0007744" key="34">
    <source>
    </source>
</evidence>
<evidence type="ECO:0007744" key="35">
    <source>
    </source>
</evidence>
<evidence type="ECO:0007744" key="36">
    <source>
    </source>
</evidence>
<evidence type="ECO:0007829" key="37">
    <source>
        <dbReference type="PDB" id="7BGB"/>
    </source>
</evidence>
<evidence type="ECO:0007829" key="38">
    <source>
        <dbReference type="PDB" id="7TRC"/>
    </source>
</evidence>
<protein>
    <recommendedName>
        <fullName evidence="22">Telomerase Cajal body protein 1</fullName>
    </recommendedName>
    <alternativeName>
        <fullName evidence="24">WD repeat-containing protein 79</fullName>
    </alternativeName>
    <alternativeName>
        <fullName evidence="23">WD40 repeat-containing protein antisense to TP53 gene</fullName>
        <shortName evidence="25">WRAP53beta</shortName>
    </alternativeName>
</protein>
<feature type="chain" id="PRO_0000242696" description="Telomerase Cajal body protein 1">
    <location>
        <begin position="1"/>
        <end position="548"/>
    </location>
</feature>
<feature type="repeat" description="WD 1" evidence="1">
    <location>
        <begin position="167"/>
        <end position="206"/>
    </location>
</feature>
<feature type="repeat" description="WD 2" evidence="1">
    <location>
        <begin position="222"/>
        <end position="267"/>
    </location>
</feature>
<feature type="repeat" description="WD 3" evidence="1">
    <location>
        <begin position="272"/>
        <end position="313"/>
    </location>
</feature>
<feature type="repeat" description="WD 4" evidence="1">
    <location>
        <begin position="323"/>
        <end position="364"/>
    </location>
</feature>
<feature type="repeat" description="WD 5" evidence="1">
    <location>
        <begin position="365"/>
        <end position="405"/>
    </location>
</feature>
<feature type="repeat" description="WD 6" evidence="1">
    <location>
        <begin position="411"/>
        <end position="450"/>
    </location>
</feature>
<feature type="region of interest" description="Disordered" evidence="2">
    <location>
        <begin position="1"/>
        <end position="142"/>
    </location>
</feature>
<feature type="region of interest" description="Disordered" evidence="2">
    <location>
        <begin position="526"/>
        <end position="548"/>
    </location>
</feature>
<feature type="compositionally biased region" description="Low complexity" evidence="2">
    <location>
        <begin position="15"/>
        <end position="31"/>
    </location>
</feature>
<feature type="compositionally biased region" description="Gly residues" evidence="2">
    <location>
        <begin position="535"/>
        <end position="548"/>
    </location>
</feature>
<feature type="modified residue" description="Phosphoserine" evidence="31 33">
    <location>
        <position position="26"/>
    </location>
</feature>
<feature type="modified residue" description="Phosphoserine" evidence="31 33">
    <location>
        <position position="30"/>
    </location>
</feature>
<feature type="modified residue" description="Phosphoserine" evidence="29 30 31 35 36">
    <location>
        <position position="54"/>
    </location>
</feature>
<feature type="modified residue" description="Phosphoserine; by ATM" evidence="17 35">
    <location>
        <position position="64"/>
    </location>
</feature>
<feature type="modified residue" description="Phosphoserine" evidence="31 32 36">
    <location>
        <position position="85"/>
    </location>
</feature>
<feature type="modified residue" description="Phosphoserine" evidence="28 31 32 33 35 36">
    <location>
        <position position="90"/>
    </location>
</feature>
<feature type="modified residue" description="Phosphoserine" evidence="31 32">
    <location>
        <position position="112"/>
    </location>
</feature>
<feature type="modified residue" description="Phosphoserine" evidence="31 32">
    <location>
        <position position="114"/>
    </location>
</feature>
<feature type="modified residue" description="Phosphothreonine" evidence="31 32">
    <location>
        <position position="489"/>
    </location>
</feature>
<feature type="modified residue" description="Phosphoserine" evidence="31 32 33 34 35">
    <location>
        <position position="491"/>
    </location>
</feature>
<feature type="sequence variant" id="VAR_026865" description="In dbSNP:rs17880282.">
    <original>P</original>
    <variation>S</variation>
    <location>
        <position position="11"/>
    </location>
</feature>
<feature type="sequence variant" id="VAR_026866" description="In dbSNP:rs2287499." evidence="8 21">
    <original>R</original>
    <variation>G</variation>
    <location>
        <position position="68"/>
    </location>
</feature>
<feature type="sequence variant" id="VAR_057618" description="In dbSNP:rs34067256.">
    <original>P</original>
    <variation>R</variation>
    <location>
        <position position="136"/>
    </location>
</feature>
<feature type="sequence variant" id="VAR_065873" description="In DKCB3; disrupts telomerase localization to Cajal bodies resulting in misdirection of telomerase RNA to nucleoli; dbSNP:rs281865547." evidence="8">
    <original>F</original>
    <variation>L</variation>
    <location>
        <position position="164"/>
    </location>
</feature>
<feature type="sequence variant" id="VAR_057619" description="In dbSNP:rs35762939.">
    <original>N</original>
    <variation>T</variation>
    <location>
        <position position="187"/>
    </location>
</feature>
<feature type="sequence variant" id="VAR_065874" description="In DKCB3; shortened telomeres; disrupts telomerase localization to Cajal bodies resulting in misdirection of telomerase RNA to nucleoli; dbSNP:rs281865549." evidence="8 9">
    <original>H</original>
    <variation>Y</variation>
    <location>
        <position position="376"/>
    </location>
</feature>
<feature type="sequence variant" id="VAR_065875" description="In DKCB3; disrupts telomerase localization to Cajal bodies resulting in misdirection of telomerase RNA to nucleoli; dbSNP:rs281865548." evidence="8">
    <original>R</original>
    <variation>W</variation>
    <location>
        <position position="398"/>
    </location>
</feature>
<feature type="sequence variant" id="VAR_065876" description="In DKCB3; shortened telomeres; disrupts telomerase localization to Cajal bodies resulting in misdirection of telomerase RNA to nucleoli; dbSNP:rs281865550." evidence="8 9">
    <original>G</original>
    <variation>R</variation>
    <location>
        <position position="435"/>
    </location>
</feature>
<feature type="sequence variant" id="VAR_057620" description="In dbSNP:rs35123152.">
    <original>E</original>
    <variation>Q</variation>
    <location>
        <position position="494"/>
    </location>
</feature>
<feature type="sequence variant" id="VAR_026867" description="In dbSNP:rs7640." evidence="8">
    <original>A</original>
    <variation>G</variation>
    <location>
        <position position="522"/>
    </location>
</feature>
<feature type="mutagenesis site" description="Abolished phosphorylation by ATM and impaired ability to promote DNA repair." evidence="17">
    <original>S</original>
    <variation>A</variation>
    <location>
        <position position="64"/>
    </location>
</feature>
<feature type="sequence conflict" description="In Ref. 2; BAA91579." evidence="26" ref="2">
    <original>A</original>
    <variation>V</variation>
    <location>
        <position position="21"/>
    </location>
</feature>
<feature type="sequence conflict" description="In Ref. 2; BAG51781." evidence="26" ref="2">
    <original>E</original>
    <variation>G</variation>
    <location>
        <position position="497"/>
    </location>
</feature>
<feature type="sequence conflict" description="In Ref. 2; BAG51781." evidence="26" ref="2">
    <original>S</original>
    <variation>G</variation>
    <location>
        <position position="526"/>
    </location>
</feature>
<feature type="strand" evidence="38">
    <location>
        <begin position="155"/>
        <end position="160"/>
    </location>
</feature>
<feature type="helix" evidence="38">
    <location>
        <begin position="163"/>
        <end position="166"/>
    </location>
</feature>
<feature type="strand" evidence="38">
    <location>
        <begin position="167"/>
        <end position="169"/>
    </location>
</feature>
<feature type="strand" evidence="38">
    <location>
        <begin position="172"/>
        <end position="177"/>
    </location>
</feature>
<feature type="strand" evidence="38">
    <location>
        <begin position="179"/>
        <end position="188"/>
    </location>
</feature>
<feature type="strand" evidence="38">
    <location>
        <begin position="193"/>
        <end position="197"/>
    </location>
</feature>
<feature type="strand" evidence="38">
    <location>
        <begin position="217"/>
        <end position="220"/>
    </location>
</feature>
<feature type="strand" evidence="38">
    <location>
        <begin position="228"/>
        <end position="231"/>
    </location>
</feature>
<feature type="helix" evidence="38">
    <location>
        <begin position="240"/>
        <end position="242"/>
    </location>
</feature>
<feature type="strand" evidence="38">
    <location>
        <begin position="244"/>
        <end position="248"/>
    </location>
</feature>
<feature type="strand" evidence="38">
    <location>
        <begin position="250"/>
        <end position="252"/>
    </location>
</feature>
<feature type="strand" evidence="38">
    <location>
        <begin position="254"/>
        <end position="258"/>
    </location>
</feature>
<feature type="turn" evidence="38">
    <location>
        <begin position="259"/>
        <end position="261"/>
    </location>
</feature>
<feature type="strand" evidence="38">
    <location>
        <begin position="264"/>
        <end position="268"/>
    </location>
</feature>
<feature type="strand" evidence="37">
    <location>
        <begin position="273"/>
        <end position="275"/>
    </location>
</feature>
<feature type="strand" evidence="38">
    <location>
        <begin position="281"/>
        <end position="285"/>
    </location>
</feature>
<feature type="strand" evidence="38">
    <location>
        <begin position="292"/>
        <end position="297"/>
    </location>
</feature>
<feature type="strand" evidence="38">
    <location>
        <begin position="299"/>
        <end position="302"/>
    </location>
</feature>
<feature type="strand" evidence="38">
    <location>
        <begin position="305"/>
        <end position="307"/>
    </location>
</feature>
<feature type="strand" evidence="38">
    <location>
        <begin position="313"/>
        <end position="318"/>
    </location>
</feature>
<feature type="strand" evidence="38">
    <location>
        <begin position="320"/>
        <end position="323"/>
    </location>
</feature>
<feature type="strand" evidence="38">
    <location>
        <begin position="326"/>
        <end position="334"/>
    </location>
</feature>
<feature type="turn" evidence="38">
    <location>
        <begin position="335"/>
        <end position="338"/>
    </location>
</feature>
<feature type="strand" evidence="38">
    <location>
        <begin position="339"/>
        <end position="344"/>
    </location>
</feature>
<feature type="strand" evidence="38">
    <location>
        <begin position="349"/>
        <end position="356"/>
    </location>
</feature>
<feature type="strand" evidence="38">
    <location>
        <begin position="359"/>
        <end position="363"/>
    </location>
</feature>
<feature type="strand" evidence="38">
    <location>
        <begin position="373"/>
        <end position="375"/>
    </location>
</feature>
<feature type="strand" evidence="38">
    <location>
        <begin position="379"/>
        <end position="384"/>
    </location>
</feature>
<feature type="strand" evidence="38">
    <location>
        <begin position="394"/>
        <end position="399"/>
    </location>
</feature>
<feature type="strand" evidence="37">
    <location>
        <begin position="406"/>
        <end position="408"/>
    </location>
</feature>
<feature type="strand" evidence="38">
    <location>
        <begin position="413"/>
        <end position="415"/>
    </location>
</feature>
<feature type="strand" evidence="38">
    <location>
        <begin position="419"/>
        <end position="421"/>
    </location>
</feature>
<feature type="strand" evidence="38">
    <location>
        <begin position="423"/>
        <end position="430"/>
    </location>
</feature>
<feature type="strand" evidence="38">
    <location>
        <begin position="432"/>
        <end position="435"/>
    </location>
</feature>
<feature type="strand" evidence="38">
    <location>
        <begin position="437"/>
        <end position="441"/>
    </location>
</feature>
<feature type="strand" evidence="38">
    <location>
        <begin position="455"/>
        <end position="457"/>
    </location>
</feature>
<feature type="strand" evidence="38">
    <location>
        <begin position="464"/>
        <end position="469"/>
    </location>
</feature>
<feature type="strand" evidence="38">
    <location>
        <begin position="471"/>
        <end position="474"/>
    </location>
</feature>
<feature type="strand" evidence="38">
    <location>
        <begin position="476"/>
        <end position="480"/>
    </location>
</feature>
<feature type="strand" evidence="38">
    <location>
        <begin position="506"/>
        <end position="510"/>
    </location>
</feature>
<comment type="function">
    <text evidence="3 5 6 7 10 13 14 16 17 19 20">RNA chaperone that plays a key role in telomere maintenance and RNA localization to Cajal bodies (PubMed:29695869, PubMed:29804836). Specifically recognizes and binds the Cajal body box (CAB box) present in both small Cajal body RNAs (scaRNAs) and telomerase RNA template component (TERC) (PubMed:19285445, PubMed:20351177, PubMed:29695869, PubMed:29804836). Essential component of the telomerase holoenzyme complex, a ribonucleoprotein complex essential for the replication of chromosome termini that elongates telomeres in most eukaryotes (PubMed:19179534, PubMed:20351177, PubMed:26170453, PubMed:29695869). In the telomerase holoenzyme complex, required to stimulate the catalytic activity of the complex (PubMed:27525486, PubMed:29804836). Acts by specifically binding the CAB box of the TERC RNA and controlling the folding of the CR4/CR5 region of the TERC RNA, a critical step for telomerase activity (PubMed:29804836). In addition, also controls telomerase holoenzyme complex localization to Cajal body (PubMed:22547674). During S phase, required for delivery of TERC to telomeres during S phase and for telomerase activity (PubMed:29804836). In addition to its role in telomere maintenance, also required for Cajal body formation, probably by mediating localization of scaRNAs to Cajal bodies (PubMed:19285445, PubMed:21072240). Also plays a role in DNA repair: phosphorylated by ATM in response to DNA damage and relocalizes to sites of DNA double-strand breaks to promote the repair of DNA double-strand breaks (PubMed:25512560, PubMed:27715493). Acts by recruiting the ubiquitin ligase RNF8 to DNA breaks and promote both homologous recombination (HR) and non-homologous end joining (NHEJ) (PubMed:25512560, PubMed:27715493).</text>
</comment>
<comment type="subunit">
    <text evidence="3 6 7 12 13 14 15 17 19">Component of the telomerase holoenzyme complex composed of one molecule of TERT, one molecule of WRAP53/TCAB1, two molecules of H/ACA ribonucleoprotein complex subunits DKC1, NOP10, NHP2 and GAR1, and a telomerase RNA template component (TERC) (PubMed:19179534, PubMed:20351177, PubMed:26170453, PubMed:29695869). The telomerase holoenzyme complex is associated with TEP1, SMG6/EST1A and POT1 (PubMed:19179534). Interacts with the chaperonin-containing T-complex (TRiC) complex; which mediates the folding of WRAP53/TCAB1 (PubMed:25467444). Interacts with COIL (PubMed:21072240). Interacts with SMN1 (PubMed:21072240). Interacts with RNF8 (PubMed:25512560). Interacts with histone H2AX (PubMed:26734725, PubMed:27715493).</text>
</comment>
<comment type="interaction">
    <interactant intactId="EBI-2563542">
        <id>Q9BUR4</id>
    </interactant>
    <interactant intactId="EBI-945751">
        <id>P38432</id>
        <label>COIL</label>
    </interactant>
    <organismsDiffer>false</organismsDiffer>
    <experiments>4</experiments>
</comment>
<comment type="interaction">
    <interactant intactId="EBI-2563542">
        <id>Q9BUR4</id>
    </interactant>
    <interactant intactId="EBI-395421">
        <id>Q16637</id>
        <label>SMN2</label>
    </interactant>
    <organismsDiffer>false</organismsDiffer>
    <experiments>5</experiments>
</comment>
<comment type="interaction">
    <interactant intactId="EBI-2563542">
        <id>Q9BUR4</id>
    </interactant>
    <interactant intactId="EBI-2514383">
        <id>Q5T6F2</id>
        <label>UBAP2</label>
    </interactant>
    <organismsDiffer>false</organismsDiffer>
    <experiments>3</experiments>
</comment>
<comment type="interaction">
    <interactant intactId="EBI-2563542">
        <id>Q9BUR4</id>
    </interactant>
    <interactant intactId="EBI-2107455">
        <id>Q08AM6</id>
        <label>VAC14</label>
    </interactant>
    <organismsDiffer>false</organismsDiffer>
    <experiments>3</experiments>
</comment>
<comment type="interaction">
    <interactant intactId="EBI-2563542">
        <id>Q9BUR4</id>
    </interactant>
    <interactant intactId="EBI-2563542">
        <id>Q9BUR4</id>
        <label>WRAP53</label>
    </interactant>
    <organismsDiffer>false</organismsDiffer>
    <experiments>3</experiments>
</comment>
<comment type="interaction">
    <interactant intactId="EBI-2563542">
        <id>Q9BUR4</id>
    </interactant>
    <interactant intactId="EBI-10714431">
        <id>O77622</id>
        <label>CCT6</label>
    </interactant>
    <organismsDiffer>true</organismsDiffer>
    <experiments>2</experiments>
</comment>
<comment type="subcellular location">
    <subcellularLocation>
        <location evidence="3 5 7 10 11 14">Nucleus</location>
        <location evidence="3 5 7 10 11 14">Cajal body</location>
    </subcellularLocation>
    <subcellularLocation>
        <location evidence="10 20">Chromosome</location>
        <location evidence="10 20">Telomere</location>
    </subcellularLocation>
    <subcellularLocation>
        <location evidence="13 15 17">Chromosome</location>
    </subcellularLocation>
    <text evidence="14 15 17">Released from telomerase RNA template component (TERC) in mitotic cells coincident with delocalization from Cajal bodies (PubMed:26170453). In response to DNA damage, localizes to sites of DNA double-strand breaks following phosphorylation by ATM (PubMed:26734725, PubMed:27715493).</text>
</comment>
<comment type="tissue specificity">
    <text evidence="4">Expressed in all tissues and cell lines examined.</text>
</comment>
<comment type="induction">
    <text evidence="18">(Microbial infection) Over-expressed following infection by Epstein-Barr virus.</text>
</comment>
<comment type="PTM">
    <text evidence="17">Phosphorylated at Ser-64 by ATM in response to DNA damage, promoting its interaction with histone H2AX and localization to sites of DNA double-strand breaks.</text>
</comment>
<comment type="disease" evidence="8 9">
    <disease id="DI-03168">
        <name>Dyskeratosis congenita, autosomal recessive, 3</name>
        <acronym>DKCB3</acronym>
        <description>A rare multisystem disorder caused by defective telomere maintenance. It is characterized by progressive bone marrow failure, and the clinical triad of reticulated skin hyperpigmentation, nail dystrophy, and mucosal leukoplakia. Common but variable features include premature graying, aplastic anemia, low platelets, osteoporosis, pulmonary fibrosis, and liver fibrosis among others. Early mortality is often associated with bone marrow failure, infections, fatal pulmonary complications, or malignancy.</description>
        <dbReference type="MIM" id="613988"/>
    </disease>
    <text>The disease is caused by variants affecting the gene represented in this entry.</text>
</comment>
<comment type="miscellaneous">
    <text evidence="4">The mRNA encoding this protein plays a critical role in the regulation of p53/TP53 expression at the post-transcriptional level; it is involved both in maintaining basal p53/TP53 mRNA levels and in p53/TP53 induction upon DNA damage.</text>
</comment>
<comment type="similarity">
    <text evidence="26">Belongs to the TCAB1 family.</text>
</comment>
<comment type="online information" name="Atlas of Genetics and Cytogenetics in Oncology and Haematology">
    <link uri="https://atlasgeneticsoncology.org/gene/50705/WRAP53"/>
</comment>